<keyword id="KW-1003">Cell membrane</keyword>
<keyword id="KW-0966">Cell projection</keyword>
<keyword id="KW-0325">Glycoprotein</keyword>
<keyword id="KW-0472">Membrane</keyword>
<keyword id="KW-0597">Phosphoprotein</keyword>
<keyword id="KW-1185">Reference proteome</keyword>
<keyword id="KW-0762">Sugar transport</keyword>
<keyword id="KW-0812">Transmembrane</keyword>
<keyword id="KW-1133">Transmembrane helix</keyword>
<keyword id="KW-0813">Transport</keyword>
<feature type="chain" id="PRO_0000050357" description="Solute carrier family 2, facilitated glucose transporter member 3">
    <location>
        <begin position="1"/>
        <end position="494"/>
    </location>
</feature>
<feature type="topological domain" description="Cytoplasmic" evidence="7">
    <location>
        <begin position="1"/>
        <end position="10"/>
    </location>
</feature>
<feature type="transmembrane region" description="Helical; Name=1" evidence="1 4">
    <location>
        <begin position="11"/>
        <end position="32"/>
    </location>
</feature>
<feature type="topological domain" description="Extracellular" evidence="7">
    <location>
        <begin position="33"/>
        <end position="64"/>
    </location>
</feature>
<feature type="transmembrane region" description="Helical; Name=2" evidence="1 4">
    <location>
        <begin position="65"/>
        <end position="84"/>
    </location>
</feature>
<feature type="topological domain" description="Cytoplasmic" evidence="7">
    <location>
        <begin position="85"/>
        <end position="89"/>
    </location>
</feature>
<feature type="transmembrane region" description="Helical; Name=3" evidence="1 4">
    <location>
        <begin position="90"/>
        <end position="110"/>
    </location>
</feature>
<feature type="topological domain" description="Extracellular" evidence="7">
    <location>
        <begin position="111"/>
        <end position="117"/>
    </location>
</feature>
<feature type="transmembrane region" description="Helical; Name=4" evidence="1 4">
    <location>
        <begin position="118"/>
        <end position="141"/>
    </location>
</feature>
<feature type="topological domain" description="Cytoplasmic" evidence="7">
    <location>
        <begin position="142"/>
        <end position="152"/>
    </location>
</feature>
<feature type="transmembrane region" description="Helical; Name=5" evidence="1 4">
    <location>
        <begin position="153"/>
        <end position="173"/>
    </location>
</feature>
<feature type="topological domain" description="Extracellular" evidence="7">
    <location>
        <begin position="174"/>
        <end position="182"/>
    </location>
</feature>
<feature type="transmembrane region" description="Helical; Name=6" evidence="1 4">
    <location>
        <begin position="183"/>
        <end position="203"/>
    </location>
</feature>
<feature type="topological domain" description="Cytoplasmic" evidence="7">
    <location>
        <begin position="204"/>
        <end position="268"/>
    </location>
</feature>
<feature type="transmembrane region" description="Helical; Name=7" evidence="1 4">
    <location>
        <begin position="269"/>
        <end position="289"/>
    </location>
</feature>
<feature type="topological domain" description="Extracellular" evidence="7">
    <location>
        <begin position="290"/>
        <end position="303"/>
    </location>
</feature>
<feature type="transmembrane region" description="Helical; Name=8" evidence="1 4">
    <location>
        <begin position="304"/>
        <end position="324"/>
    </location>
</feature>
<feature type="topological domain" description="Cytoplasmic" evidence="7">
    <location>
        <begin position="325"/>
        <end position="330"/>
    </location>
</feature>
<feature type="transmembrane region" description="Helical; Name=9" evidence="1 4">
    <location>
        <begin position="331"/>
        <end position="351"/>
    </location>
</feature>
<feature type="topological domain" description="Extracellular" evidence="7">
    <location>
        <begin position="352"/>
        <end position="362"/>
    </location>
</feature>
<feature type="transmembrane region" description="Helical; Name=10" evidence="1 4">
    <location>
        <begin position="363"/>
        <end position="388"/>
    </location>
</feature>
<feature type="topological domain" description="Cytoplasmic" evidence="7">
    <location>
        <begin position="389"/>
        <end position="398"/>
    </location>
</feature>
<feature type="transmembrane region" description="Helical; Name=11" evidence="1 4">
    <location>
        <begin position="399"/>
        <end position="419"/>
    </location>
</feature>
<feature type="topological domain" description="Extracellular" evidence="7">
    <location>
        <begin position="420"/>
        <end position="428"/>
    </location>
</feature>
<feature type="transmembrane region" description="Helical; Name=12" evidence="1 4">
    <location>
        <begin position="429"/>
        <end position="449"/>
    </location>
</feature>
<feature type="topological domain" description="Cytoplasmic" evidence="7">
    <location>
        <begin position="450"/>
        <end position="494"/>
    </location>
</feature>
<feature type="region of interest" description="Important for selectivity against fructose" evidence="1">
    <location>
        <begin position="276"/>
        <end position="278"/>
    </location>
</feature>
<feature type="binding site" evidence="1">
    <location>
        <position position="158"/>
    </location>
    <ligand>
        <name>D-glucose</name>
        <dbReference type="ChEBI" id="CHEBI:4167"/>
    </ligand>
</feature>
<feature type="binding site" evidence="1">
    <location>
        <begin position="279"/>
        <end position="280"/>
    </location>
    <ligand>
        <name>D-glucose</name>
        <dbReference type="ChEBI" id="CHEBI:4167"/>
    </ligand>
</feature>
<feature type="binding site" evidence="1">
    <location>
        <position position="285"/>
    </location>
    <ligand>
        <name>D-glucose</name>
        <dbReference type="ChEBI" id="CHEBI:4167"/>
    </ligand>
</feature>
<feature type="binding site" evidence="1">
    <location>
        <position position="314"/>
    </location>
    <ligand>
        <name>D-glucose</name>
        <dbReference type="ChEBI" id="CHEBI:4167"/>
    </ligand>
</feature>
<feature type="binding site" evidence="1">
    <location>
        <position position="377"/>
    </location>
    <ligand>
        <name>D-glucose</name>
        <dbReference type="ChEBI" id="CHEBI:4167"/>
    </ligand>
</feature>
<feature type="binding site" evidence="1">
    <location>
        <position position="385"/>
    </location>
    <ligand>
        <name>D-glucose</name>
        <dbReference type="ChEBI" id="CHEBI:4167"/>
    </ligand>
</feature>
<feature type="modified residue" description="Phosphothreonine" evidence="2">
    <location>
        <position position="231"/>
    </location>
</feature>
<feature type="modified residue" description="Phosphoserine" evidence="3">
    <location>
        <position position="484"/>
    </location>
</feature>
<feature type="modified residue" description="Phosphothreonine" evidence="3">
    <location>
        <position position="491"/>
    </location>
</feature>
<feature type="glycosylation site" description="N-linked (GlcNAc...) asparagine" evidence="4">
    <location>
        <position position="43"/>
    </location>
</feature>
<feature type="sequence conflict" description="In Ref. 2; AAD26251." evidence="7" ref="2">
    <original>CKIS</original>
    <variation>AKIA</variation>
    <location>
        <begin position="110"/>
        <end position="113"/>
    </location>
</feature>
<feature type="sequence conflict" description="In Ref. 2; AAD26251." evidence="7" ref="2">
    <original>VIGV</original>
    <variation>LIGI</variation>
    <location>
        <begin position="125"/>
        <end position="128"/>
    </location>
</feature>
<feature type="sequence conflict" description="In Ref. 2; AAD26251." evidence="7" ref="2">
    <original>I</original>
    <variation>V</variation>
    <location>
        <position position="144"/>
    </location>
</feature>
<feature type="sequence conflict" description="In Ref. 2; AAD26251." evidence="7" ref="2">
    <original>KEEDEAK</original>
    <variation>EEDEAKQIL</variation>
    <location>
        <begin position="216"/>
        <end position="222"/>
    </location>
</feature>
<feature type="sequence conflict" description="In Ref. 2; AAD26251." evidence="7" ref="2">
    <original>A</original>
    <variation>R</variation>
    <location>
        <position position="249"/>
    </location>
</feature>
<feature type="sequence conflict" description="In Ref. 2; AAD26251." evidence="7" ref="2">
    <original>K</original>
    <variation>R</variation>
    <location>
        <position position="301"/>
    </location>
</feature>
<feature type="sequence conflict" description="In Ref. 2; AAD26251." evidence="7" ref="2">
    <original>V</original>
    <variation>A</variation>
    <location>
        <position position="373"/>
    </location>
</feature>
<feature type="sequence conflict" description="In Ref. 2; AAD26251." evidence="7" ref="2">
    <original>FIVAELFSQG</original>
    <variation>LIVTGLFSQD</variation>
    <location>
        <begin position="386"/>
        <end position="395"/>
    </location>
</feature>
<name>GTR3_RABIT</name>
<sequence length="494" mass="53994">MGTTKVTPYLIFATSVAAIGSFQFGYNTGVINAPEMIIRDFLNYTLDEKLDEPPSRLLLTNLWSLSVAIFSVGGMIGSFSVGLFNRFGRRNSMLIVNLLAVIGGCLMGFCKISESVEMLILGRLVIGVFCGLCTGFVPMYIGEISPTALRGAFGTLNQLGIVIGILVAQIFGLEIILGSEVLWPVLLGFTIIPAILQSAALPFCPESPRFLLINKKEEDEAKQILQRLWGTQDVAQDIQEMKEESARMAQEKQVTVLELFRAPSYRQPIIISIVLQLSQQLSGINAVFYYSTGIFKDAGVKEPIYATIGAGVVNTIFTIVSVFLVERAGRRTLHLIGLGGMALCSVLMTVSLLLKDKYDTMSLVCIAAILIYVAFFEIGPGPIPWFIVAELFSQGPRPAAMAVAGCSNWTSNFLVGLLFPSAAYYLGAYVFVIFAVFLVAFFIFTFFKVPETRGRTFEDITRAFEGQAAEANKLGKGPTMEMNSIQPIETTTHV</sequence>
<comment type="function">
    <text evidence="1 2">Facilitative glucose transporter. Can also mediate the uptake of various other monosaccharides across the cell membrane. Mediates the uptake of glucose, 2-deoxyglucose, galactose, mannose, xylose and fucose, and probably also dehydroascorbate. Does not mediate fructose transport. Required for mesendoderm differentiation (By similarity).</text>
</comment>
<comment type="catalytic activity">
    <reaction evidence="1">
        <text>D-glucose(out) = D-glucose(in)</text>
        <dbReference type="Rhea" id="RHEA:60376"/>
        <dbReference type="ChEBI" id="CHEBI:4167"/>
    </reaction>
</comment>
<comment type="catalytic activity">
    <reaction evidence="1">
        <text>D-galactose(in) = D-galactose(out)</text>
        <dbReference type="Rhea" id="RHEA:34915"/>
        <dbReference type="ChEBI" id="CHEBI:4139"/>
    </reaction>
</comment>
<comment type="activity regulation">
    <text evidence="1">Deoxyglucose transport is inhibited by D-glucose, D-galactose and maltose. Galactose transport is inhibited by D-glucose and maltose.</text>
</comment>
<comment type="subunit">
    <text evidence="2">Interacts with SMIM43; the interaction may promote SLC2A3-mediated glucose transport to meet the energy needs of mesendoderm differentiation.</text>
</comment>
<comment type="subcellular location">
    <subcellularLocation>
        <location evidence="1">Cell membrane</location>
        <topology evidence="1">Multi-pass membrane protein</topology>
    </subcellularLocation>
    <subcellularLocation>
        <location evidence="3">Perikaryon</location>
    </subcellularLocation>
    <subcellularLocation>
        <location evidence="3">Cell projection</location>
    </subcellularLocation>
    <text evidence="3">Localized to densely spaced patches along neuronal processes.</text>
</comment>
<comment type="tissue specificity">
    <text evidence="5">Detected in stomach, placenta, lung and brain.</text>
</comment>
<comment type="domain">
    <text evidence="1">Transport is mediated via a series of conformation changes, switching between a conformation where the substrate-binding cavity is accessible from the outside, and a another conformation where it is accessible from the cytoplasm.</text>
</comment>
<comment type="similarity">
    <text evidence="7">Belongs to the major facilitator superfamily. Sugar transporter (TC 2.A.1.1) family. Glucose transporter subfamily.</text>
</comment>
<gene>
    <name evidence="1" type="primary">SLC2A3</name>
    <name evidence="6" type="synonym">GLUT3</name>
</gene>
<evidence type="ECO:0000250" key="1">
    <source>
        <dbReference type="UniProtKB" id="P11169"/>
    </source>
</evidence>
<evidence type="ECO:0000250" key="2">
    <source>
        <dbReference type="UniProtKB" id="P32037"/>
    </source>
</evidence>
<evidence type="ECO:0000250" key="3">
    <source>
        <dbReference type="UniProtKB" id="Q07647"/>
    </source>
</evidence>
<evidence type="ECO:0000255" key="4"/>
<evidence type="ECO:0000269" key="5">
    <source>
    </source>
</evidence>
<evidence type="ECO:0000303" key="6">
    <source>
    </source>
</evidence>
<evidence type="ECO:0000305" key="7"/>
<proteinExistence type="evidence at transcript level"/>
<dbReference type="EMBL" id="AAGW02051607">
    <property type="status" value="NOT_ANNOTATED_CDS"/>
    <property type="molecule type" value="Genomic_DNA"/>
</dbReference>
<dbReference type="EMBL" id="AAGW02051608">
    <property type="status" value="NOT_ANNOTATED_CDS"/>
    <property type="molecule type" value="Genomic_DNA"/>
</dbReference>
<dbReference type="EMBL" id="AF117812">
    <property type="protein sequence ID" value="AAD26251.1"/>
    <property type="molecule type" value="mRNA"/>
</dbReference>
<dbReference type="RefSeq" id="XP_002712807.1">
    <property type="nucleotide sequence ID" value="XM_002712761.3"/>
</dbReference>
<dbReference type="SMR" id="Q9XSC2"/>
<dbReference type="FunCoup" id="Q9XSC2">
    <property type="interactions" value="90"/>
</dbReference>
<dbReference type="STRING" id="9986.ENSOCUP00000027226"/>
<dbReference type="GlyCosmos" id="Q9XSC2">
    <property type="glycosylation" value="1 site, No reported glycans"/>
</dbReference>
<dbReference type="PaxDb" id="9986-ENSOCUP00000016591"/>
<dbReference type="Ensembl" id="ENSOCUT00000024311.3">
    <property type="protein sequence ID" value="ENSOCUP00000016591.1"/>
    <property type="gene ID" value="ENSOCUG00000008575.4"/>
</dbReference>
<dbReference type="GeneID" id="100125981"/>
<dbReference type="KEGG" id="ocu:100125981"/>
<dbReference type="eggNOG" id="KOG0569">
    <property type="taxonomic scope" value="Eukaryota"/>
</dbReference>
<dbReference type="GeneTree" id="ENSGT00940000160313"/>
<dbReference type="HOGENOM" id="CLU_001265_30_5_1"/>
<dbReference type="InParanoid" id="Q9XSC2"/>
<dbReference type="OMA" id="GVFVYYM"/>
<dbReference type="OrthoDB" id="4540492at2759"/>
<dbReference type="TreeFam" id="TF313762"/>
<dbReference type="Proteomes" id="UP000001811">
    <property type="component" value="Chromosome 8"/>
</dbReference>
<dbReference type="Bgee" id="ENSOCUG00000008575">
    <property type="expression patterns" value="Expressed in upper lobe of left lung and 15 other cell types or tissues"/>
</dbReference>
<dbReference type="GO" id="GO:0042995">
    <property type="term" value="C:cell projection"/>
    <property type="evidence" value="ECO:0007669"/>
    <property type="project" value="UniProtKB-SubCell"/>
</dbReference>
<dbReference type="GO" id="GO:0016020">
    <property type="term" value="C:membrane"/>
    <property type="evidence" value="ECO:0000250"/>
    <property type="project" value="UniProtKB"/>
</dbReference>
<dbReference type="GO" id="GO:0043204">
    <property type="term" value="C:perikaryon"/>
    <property type="evidence" value="ECO:0007669"/>
    <property type="project" value="UniProtKB-SubCell"/>
</dbReference>
<dbReference type="GO" id="GO:0005886">
    <property type="term" value="C:plasma membrane"/>
    <property type="evidence" value="ECO:0000250"/>
    <property type="project" value="UniProtKB"/>
</dbReference>
<dbReference type="GO" id="GO:0005536">
    <property type="term" value="F:D-glucose binding"/>
    <property type="evidence" value="ECO:0000250"/>
    <property type="project" value="UniProtKB"/>
</dbReference>
<dbReference type="GO" id="GO:0055056">
    <property type="term" value="F:D-glucose transmembrane transporter activity"/>
    <property type="evidence" value="ECO:0000250"/>
    <property type="project" value="UniProtKB"/>
</dbReference>
<dbReference type="GO" id="GO:0005354">
    <property type="term" value="F:galactose transmembrane transporter activity"/>
    <property type="evidence" value="ECO:0000250"/>
    <property type="project" value="UniProtKB"/>
</dbReference>
<dbReference type="GO" id="GO:0046323">
    <property type="term" value="P:D-glucose import"/>
    <property type="evidence" value="ECO:0007669"/>
    <property type="project" value="TreeGrafter"/>
</dbReference>
<dbReference type="GO" id="GO:1904659">
    <property type="term" value="P:D-glucose transmembrane transport"/>
    <property type="evidence" value="ECO:0000250"/>
    <property type="project" value="UniProtKB"/>
</dbReference>
<dbReference type="GO" id="GO:0070837">
    <property type="term" value="P:dehydroascorbic acid transport"/>
    <property type="evidence" value="ECO:0007669"/>
    <property type="project" value="TreeGrafter"/>
</dbReference>
<dbReference type="GO" id="GO:0015757">
    <property type="term" value="P:galactose transmembrane transport"/>
    <property type="evidence" value="ECO:0000250"/>
    <property type="project" value="UniProtKB"/>
</dbReference>
<dbReference type="CDD" id="cd17431">
    <property type="entry name" value="MFS_GLUT_Class1"/>
    <property type="match status" value="1"/>
</dbReference>
<dbReference type="FunFam" id="1.20.1250.20:FF:000040">
    <property type="entry name" value="Solute carrier family 2, facilitated glucose transporter member 1"/>
    <property type="match status" value="1"/>
</dbReference>
<dbReference type="Gene3D" id="1.20.1250.20">
    <property type="entry name" value="MFS general substrate transporter like domains"/>
    <property type="match status" value="1"/>
</dbReference>
<dbReference type="InterPro" id="IPR002945">
    <property type="entry name" value="Glc_transpt_3"/>
</dbReference>
<dbReference type="InterPro" id="IPR045263">
    <property type="entry name" value="GLUT"/>
</dbReference>
<dbReference type="InterPro" id="IPR020846">
    <property type="entry name" value="MFS_dom"/>
</dbReference>
<dbReference type="InterPro" id="IPR005828">
    <property type="entry name" value="MFS_sugar_transport-like"/>
</dbReference>
<dbReference type="InterPro" id="IPR036259">
    <property type="entry name" value="MFS_trans_sf"/>
</dbReference>
<dbReference type="InterPro" id="IPR003663">
    <property type="entry name" value="Sugar/inositol_transpt"/>
</dbReference>
<dbReference type="InterPro" id="IPR005829">
    <property type="entry name" value="Sugar_transporter_CS"/>
</dbReference>
<dbReference type="NCBIfam" id="TIGR00879">
    <property type="entry name" value="SP"/>
    <property type="match status" value="1"/>
</dbReference>
<dbReference type="PANTHER" id="PTHR23503">
    <property type="entry name" value="SOLUTE CARRIER FAMILY 2"/>
    <property type="match status" value="1"/>
</dbReference>
<dbReference type="PANTHER" id="PTHR23503:SF99">
    <property type="entry name" value="SOLUTE CARRIER FAMILY 2, FACILITATED GLUCOSE TRANSPORTER MEMBER 3"/>
    <property type="match status" value="1"/>
</dbReference>
<dbReference type="Pfam" id="PF00083">
    <property type="entry name" value="Sugar_tr"/>
    <property type="match status" value="1"/>
</dbReference>
<dbReference type="PRINTS" id="PR01192">
    <property type="entry name" value="GLUCTRSPORT3"/>
</dbReference>
<dbReference type="PRINTS" id="PR00171">
    <property type="entry name" value="SUGRTRNSPORT"/>
</dbReference>
<dbReference type="SUPFAM" id="SSF103473">
    <property type="entry name" value="MFS general substrate transporter"/>
    <property type="match status" value="1"/>
</dbReference>
<dbReference type="PROSITE" id="PS50850">
    <property type="entry name" value="MFS"/>
    <property type="match status" value="1"/>
</dbReference>
<dbReference type="PROSITE" id="PS00216">
    <property type="entry name" value="SUGAR_TRANSPORT_1"/>
    <property type="match status" value="1"/>
</dbReference>
<dbReference type="PROSITE" id="PS00217">
    <property type="entry name" value="SUGAR_TRANSPORT_2"/>
    <property type="match status" value="1"/>
</dbReference>
<accession>Q9XSC2</accession>
<accession>G1TI27</accession>
<protein>
    <recommendedName>
        <fullName evidence="7">Solute carrier family 2, facilitated glucose transporter member 3</fullName>
    </recommendedName>
    <alternativeName>
        <fullName evidence="6">Glucose transporter type 3, brain</fullName>
        <shortName evidence="6">GLUT-3</shortName>
    </alternativeName>
</protein>
<reference key="1">
    <citation type="journal article" date="2011" name="Nature">
        <title>A high-resolution map of human evolutionary constraint using 29 mammals.</title>
        <authorList>
            <person name="Lindblad-Toh K."/>
            <person name="Garber M."/>
            <person name="Zuk O."/>
            <person name="Lin M.F."/>
            <person name="Parker B.J."/>
            <person name="Washietl S."/>
            <person name="Kheradpour P."/>
            <person name="Ernst J."/>
            <person name="Jordan G."/>
            <person name="Mauceli E."/>
            <person name="Ward L.D."/>
            <person name="Lowe C.B."/>
            <person name="Holloway A.K."/>
            <person name="Clamp M."/>
            <person name="Gnerre S."/>
            <person name="Alfoldi J."/>
            <person name="Beal K."/>
            <person name="Chang J."/>
            <person name="Clawson H."/>
            <person name="Cuff J."/>
            <person name="Di Palma F."/>
            <person name="Fitzgerald S."/>
            <person name="Flicek P."/>
            <person name="Guttman M."/>
            <person name="Hubisz M.J."/>
            <person name="Jaffe D.B."/>
            <person name="Jungreis I."/>
            <person name="Kent W.J."/>
            <person name="Kostka D."/>
            <person name="Lara M."/>
            <person name="Martins A.L."/>
            <person name="Massingham T."/>
            <person name="Moltke I."/>
            <person name="Raney B.J."/>
            <person name="Rasmussen M.D."/>
            <person name="Robinson J."/>
            <person name="Stark A."/>
            <person name="Vilella A.J."/>
            <person name="Wen J."/>
            <person name="Xie X."/>
            <person name="Zody M.C."/>
            <person name="Baldwin J."/>
            <person name="Bloom T."/>
            <person name="Chin C.W."/>
            <person name="Heiman D."/>
            <person name="Nicol R."/>
            <person name="Nusbaum C."/>
            <person name="Young S."/>
            <person name="Wilkinson J."/>
            <person name="Worley K.C."/>
            <person name="Kovar C.L."/>
            <person name="Muzny D.M."/>
            <person name="Gibbs R.A."/>
            <person name="Cree A."/>
            <person name="Dihn H.H."/>
            <person name="Fowler G."/>
            <person name="Jhangiani S."/>
            <person name="Joshi V."/>
            <person name="Lee S."/>
            <person name="Lewis L.R."/>
            <person name="Nazareth L.V."/>
            <person name="Okwuonu G."/>
            <person name="Santibanez J."/>
            <person name="Warren W.C."/>
            <person name="Mardis E.R."/>
            <person name="Weinstock G.M."/>
            <person name="Wilson R.K."/>
            <person name="Delehaunty K."/>
            <person name="Dooling D."/>
            <person name="Fronik C."/>
            <person name="Fulton L."/>
            <person name="Fulton B."/>
            <person name="Graves T."/>
            <person name="Minx P."/>
            <person name="Sodergren E."/>
            <person name="Birney E."/>
            <person name="Margulies E.H."/>
            <person name="Herrero J."/>
            <person name="Green E.D."/>
            <person name="Haussler D."/>
            <person name="Siepel A."/>
            <person name="Goldman N."/>
            <person name="Pollard K.S."/>
            <person name="Pedersen J.S."/>
            <person name="Lander E.S."/>
            <person name="Kellis M."/>
        </authorList>
    </citation>
    <scope>NUCLEOTIDE SEQUENCE [LARGE SCALE GENOMIC DNA]</scope>
    <source>
        <strain>Thorbecke</strain>
    </source>
</reference>
<reference key="2">
    <citation type="journal article" date="1999" name="Brain Res.">
        <title>Effect of development and hypoxic-ischemia upon rabbit brain glucose transporter expression.</title>
        <authorList>
            <person name="Devaskar S.U."/>
            <person name="Rajakumar P.A."/>
            <person name="Mink R.B."/>
            <person name="McKnight R.A."/>
            <person name="Thamotharan S."/>
            <person name="Hicks S.M."/>
        </authorList>
    </citation>
    <scope>NUCLEOTIDE SEQUENCE [MRNA] OF 97-494</scope>
    <scope>TISSUE SPECIFICITY</scope>
    <source>
        <strain>New Zealand white</strain>
    </source>
</reference>
<organism>
    <name type="scientific">Oryctolagus cuniculus</name>
    <name type="common">Rabbit</name>
    <dbReference type="NCBI Taxonomy" id="9986"/>
    <lineage>
        <taxon>Eukaryota</taxon>
        <taxon>Metazoa</taxon>
        <taxon>Chordata</taxon>
        <taxon>Craniata</taxon>
        <taxon>Vertebrata</taxon>
        <taxon>Euteleostomi</taxon>
        <taxon>Mammalia</taxon>
        <taxon>Eutheria</taxon>
        <taxon>Euarchontoglires</taxon>
        <taxon>Glires</taxon>
        <taxon>Lagomorpha</taxon>
        <taxon>Leporidae</taxon>
        <taxon>Oryctolagus</taxon>
    </lineage>
</organism>